<name>Y424_MYCPN</name>
<proteinExistence type="inferred from homology"/>
<reference key="1">
    <citation type="journal article" date="1996" name="Nucleic Acids Res.">
        <title>Complete sequence analysis of the genome of the bacterium Mycoplasma pneumoniae.</title>
        <authorList>
            <person name="Himmelreich R."/>
            <person name="Hilbert H."/>
            <person name="Plagens H."/>
            <person name="Pirkl E."/>
            <person name="Li B.-C."/>
            <person name="Herrmann R."/>
        </authorList>
    </citation>
    <scope>NUCLEOTIDE SEQUENCE [LARGE SCALE GENOMIC DNA]</scope>
    <source>
        <strain>ATCC 29342 / M129 / Subtype 1</strain>
    </source>
</reference>
<feature type="chain" id="PRO_0000211873" description="UPF0122 protein MPN_424">
    <location>
        <begin position="1"/>
        <end position="102"/>
    </location>
</feature>
<gene>
    <name type="ordered locus">MPN_424</name>
    <name type="ORF">A05_orf102</name>
    <name type="ORF">MP417</name>
</gene>
<protein>
    <recommendedName>
        <fullName>UPF0122 protein MPN_424</fullName>
    </recommendedName>
</protein>
<sequence>MNQTKLNQRLKQQQLFDIYGELLTKRQACYFNEYINLDLSMQEIADKYQVKKSSIHQHIKTCNLIFNRFEAKLQLFKKQQLRLKLYEKITDPQLREQLIKLR</sequence>
<organism>
    <name type="scientific">Mycoplasma pneumoniae (strain ATCC 29342 / M129 / Subtype 1)</name>
    <name type="common">Mycoplasmoides pneumoniae</name>
    <dbReference type="NCBI Taxonomy" id="272634"/>
    <lineage>
        <taxon>Bacteria</taxon>
        <taxon>Bacillati</taxon>
        <taxon>Mycoplasmatota</taxon>
        <taxon>Mycoplasmoidales</taxon>
        <taxon>Mycoplasmoidaceae</taxon>
        <taxon>Mycoplasmoides</taxon>
    </lineage>
</organism>
<evidence type="ECO:0000250" key="1"/>
<evidence type="ECO:0000305" key="2"/>
<accession>P75363</accession>
<comment type="function">
    <text evidence="1">Might take part in the signal recognition particle (SRP) pathway. This is inferred from the conservation of its genetic proximity to ftsY/ffh. May be a regulatory protein (By similarity).</text>
</comment>
<comment type="similarity">
    <text evidence="2">Belongs to the UPF0122 family.</text>
</comment>
<keyword id="KW-1185">Reference proteome</keyword>
<dbReference type="EMBL" id="U00089">
    <property type="protein sequence ID" value="AAB96065.1"/>
    <property type="molecule type" value="Genomic_DNA"/>
</dbReference>
<dbReference type="PIR" id="S73743">
    <property type="entry name" value="S73743"/>
</dbReference>
<dbReference type="RefSeq" id="NP_110112.1">
    <property type="nucleotide sequence ID" value="NC_000912.1"/>
</dbReference>
<dbReference type="SMR" id="P75363"/>
<dbReference type="STRING" id="272634.MPN_424"/>
<dbReference type="EnsemblBacteria" id="AAB96065">
    <property type="protein sequence ID" value="AAB96065"/>
    <property type="gene ID" value="MPN_424"/>
</dbReference>
<dbReference type="KEGG" id="mpn:MPN_424"/>
<dbReference type="PATRIC" id="fig|272634.6.peg.459"/>
<dbReference type="HOGENOM" id="CLU_129218_1_0_14"/>
<dbReference type="OrthoDB" id="404035at2"/>
<dbReference type="BioCyc" id="MPNE272634:G1GJ3-687-MONOMER"/>
<dbReference type="Proteomes" id="UP000000808">
    <property type="component" value="Chromosome"/>
</dbReference>
<dbReference type="Gene3D" id="1.10.10.10">
    <property type="entry name" value="Winged helix-like DNA-binding domain superfamily/Winged helix DNA-binding domain"/>
    <property type="match status" value="1"/>
</dbReference>
<dbReference type="HAMAP" id="MF_00245">
    <property type="entry name" value="UPF0122"/>
    <property type="match status" value="1"/>
</dbReference>
<dbReference type="InterPro" id="IPR013324">
    <property type="entry name" value="RNA_pol_sigma_r3/r4-like"/>
</dbReference>
<dbReference type="InterPro" id="IPR007394">
    <property type="entry name" value="UPF0122"/>
</dbReference>
<dbReference type="InterPro" id="IPR054831">
    <property type="entry name" value="UPF0122_fam_protein"/>
</dbReference>
<dbReference type="InterPro" id="IPR036388">
    <property type="entry name" value="WH-like_DNA-bd_sf"/>
</dbReference>
<dbReference type="NCBIfam" id="NF045758">
    <property type="entry name" value="YlxM"/>
    <property type="match status" value="1"/>
</dbReference>
<dbReference type="PANTHER" id="PTHR40083">
    <property type="entry name" value="UPF0122 PROTEIN CBO2450/CLC_2298"/>
    <property type="match status" value="1"/>
</dbReference>
<dbReference type="PANTHER" id="PTHR40083:SF1">
    <property type="entry name" value="UPF0122 PROTEIN YLXM"/>
    <property type="match status" value="1"/>
</dbReference>
<dbReference type="Pfam" id="PF04297">
    <property type="entry name" value="UPF0122"/>
    <property type="match status" value="1"/>
</dbReference>
<dbReference type="SUPFAM" id="SSF88659">
    <property type="entry name" value="Sigma3 and sigma4 domains of RNA polymerase sigma factors"/>
    <property type="match status" value="1"/>
</dbReference>